<gene>
    <name type="primary">PADI2</name>
    <name type="synonym">KIAA0994</name>
    <name type="synonym">PAD2</name>
    <name type="synonym">PDI2</name>
</gene>
<dbReference type="EC" id="3.5.3.15" evidence="1 2 3"/>
<dbReference type="EMBL" id="AB030176">
    <property type="protein sequence ID" value="BAA82557.1"/>
    <property type="molecule type" value="mRNA"/>
</dbReference>
<dbReference type="EMBL" id="AJ549502">
    <property type="protein sequence ID" value="CAE47740.1"/>
    <property type="molecule type" value="Genomic_DNA"/>
</dbReference>
<dbReference type="EMBL" id="AB023211">
    <property type="protein sequence ID" value="BAA76838.1"/>
    <property type="status" value="ALT_INIT"/>
    <property type="molecule type" value="mRNA"/>
</dbReference>
<dbReference type="EMBL" id="AL049569">
    <property type="status" value="NOT_ANNOTATED_CDS"/>
    <property type="molecule type" value="Genomic_DNA"/>
</dbReference>
<dbReference type="EMBL" id="BC009701">
    <property type="protein sequence ID" value="AAH09701.1"/>
    <property type="molecule type" value="mRNA"/>
</dbReference>
<dbReference type="CCDS" id="CCDS177.1">
    <molecule id="Q9Y2J8-1"/>
</dbReference>
<dbReference type="RefSeq" id="NP_031391.2">
    <molecule id="Q9Y2J8-1"/>
    <property type="nucleotide sequence ID" value="NM_007365.3"/>
</dbReference>
<dbReference type="PDB" id="4N20">
    <property type="method" value="X-ray"/>
    <property type="resolution" value="1.66 A"/>
    <property type="chains" value="A=1-665"/>
</dbReference>
<dbReference type="PDB" id="4N22">
    <property type="method" value="X-ray"/>
    <property type="resolution" value="1.89 A"/>
    <property type="chains" value="A=1-665"/>
</dbReference>
<dbReference type="PDB" id="4N24">
    <property type="method" value="X-ray"/>
    <property type="resolution" value="1.97 A"/>
    <property type="chains" value="A=1-665"/>
</dbReference>
<dbReference type="PDB" id="4N25">
    <property type="method" value="X-ray"/>
    <property type="resolution" value="1.93 A"/>
    <property type="chains" value="A=1-665"/>
</dbReference>
<dbReference type="PDB" id="4N26">
    <property type="method" value="X-ray"/>
    <property type="resolution" value="1.94 A"/>
    <property type="chains" value="A=1-665"/>
</dbReference>
<dbReference type="PDB" id="4N28">
    <property type="method" value="X-ray"/>
    <property type="resolution" value="1.88 A"/>
    <property type="chains" value="A=1-665"/>
</dbReference>
<dbReference type="PDB" id="4N2A">
    <property type="method" value="X-ray"/>
    <property type="resolution" value="1.70 A"/>
    <property type="chains" value="A=1-665"/>
</dbReference>
<dbReference type="PDB" id="4N2B">
    <property type="method" value="X-ray"/>
    <property type="resolution" value="1.69 A"/>
    <property type="chains" value="A=1-665"/>
</dbReference>
<dbReference type="PDB" id="4N2C">
    <property type="method" value="X-ray"/>
    <property type="resolution" value="3.02 A"/>
    <property type="chains" value="A=1-665"/>
</dbReference>
<dbReference type="PDB" id="4N2D">
    <property type="method" value="X-ray"/>
    <property type="resolution" value="2.00 A"/>
    <property type="chains" value="A=1-665"/>
</dbReference>
<dbReference type="PDB" id="4N2E">
    <property type="method" value="X-ray"/>
    <property type="resolution" value="1.86 A"/>
    <property type="chains" value="A=1-665"/>
</dbReference>
<dbReference type="PDB" id="4N2F">
    <property type="method" value="X-ray"/>
    <property type="resolution" value="1.80 A"/>
    <property type="chains" value="A=1-665"/>
</dbReference>
<dbReference type="PDB" id="4N2G">
    <property type="method" value="X-ray"/>
    <property type="resolution" value="1.85 A"/>
    <property type="chains" value="A=1-665"/>
</dbReference>
<dbReference type="PDB" id="4N2H">
    <property type="method" value="X-ray"/>
    <property type="resolution" value="1.81 A"/>
    <property type="chains" value="A=1-665"/>
</dbReference>
<dbReference type="PDB" id="4N2I">
    <property type="method" value="X-ray"/>
    <property type="resolution" value="1.90 A"/>
    <property type="chains" value="A=1-665"/>
</dbReference>
<dbReference type="PDB" id="4N2K">
    <property type="method" value="X-ray"/>
    <property type="resolution" value="1.57 A"/>
    <property type="chains" value="A=1-665"/>
</dbReference>
<dbReference type="PDB" id="4N2L">
    <property type="method" value="X-ray"/>
    <property type="resolution" value="2.10 A"/>
    <property type="chains" value="A=1-665"/>
</dbReference>
<dbReference type="PDB" id="4N2M">
    <property type="method" value="X-ray"/>
    <property type="resolution" value="1.60 A"/>
    <property type="chains" value="A=1-665"/>
</dbReference>
<dbReference type="PDB" id="4N2N">
    <property type="method" value="X-ray"/>
    <property type="resolution" value="1.80 A"/>
    <property type="chains" value="A=1-665"/>
</dbReference>
<dbReference type="PDB" id="9B96">
    <property type="method" value="X-ray"/>
    <property type="resolution" value="1.64 A"/>
    <property type="chains" value="A=1-665"/>
</dbReference>
<dbReference type="PDB" id="9B97">
    <property type="method" value="X-ray"/>
    <property type="resolution" value="1.95 A"/>
    <property type="chains" value="A=1-665"/>
</dbReference>
<dbReference type="PDB" id="9B98">
    <property type="method" value="X-ray"/>
    <property type="resolution" value="2.00 A"/>
    <property type="chains" value="A=1-665"/>
</dbReference>
<dbReference type="PDBsum" id="4N20"/>
<dbReference type="PDBsum" id="4N22"/>
<dbReference type="PDBsum" id="4N24"/>
<dbReference type="PDBsum" id="4N25"/>
<dbReference type="PDBsum" id="4N26"/>
<dbReference type="PDBsum" id="4N28"/>
<dbReference type="PDBsum" id="4N2A"/>
<dbReference type="PDBsum" id="4N2B"/>
<dbReference type="PDBsum" id="4N2C"/>
<dbReference type="PDBsum" id="4N2D"/>
<dbReference type="PDBsum" id="4N2E"/>
<dbReference type="PDBsum" id="4N2F"/>
<dbReference type="PDBsum" id="4N2G"/>
<dbReference type="PDBsum" id="4N2H"/>
<dbReference type="PDBsum" id="4N2I"/>
<dbReference type="PDBsum" id="4N2K"/>
<dbReference type="PDBsum" id="4N2L"/>
<dbReference type="PDBsum" id="4N2M"/>
<dbReference type="PDBsum" id="4N2N"/>
<dbReference type="PDBsum" id="9B96"/>
<dbReference type="PDBsum" id="9B97"/>
<dbReference type="PDBsum" id="9B98"/>
<dbReference type="SMR" id="Q9Y2J8"/>
<dbReference type="BioGRID" id="116404">
    <property type="interactions" value="6"/>
</dbReference>
<dbReference type="FunCoup" id="Q9Y2J8">
    <property type="interactions" value="82"/>
</dbReference>
<dbReference type="IntAct" id="Q9Y2J8">
    <property type="interactions" value="5"/>
</dbReference>
<dbReference type="STRING" id="9606.ENSP00000364635"/>
<dbReference type="BindingDB" id="Q9Y2J8"/>
<dbReference type="ChEMBL" id="CHEMBL1909487"/>
<dbReference type="DrugBank" id="DB00155">
    <property type="generic name" value="Citrulline"/>
</dbReference>
<dbReference type="iPTMnet" id="Q9Y2J8"/>
<dbReference type="PhosphoSitePlus" id="Q9Y2J8"/>
<dbReference type="BioMuta" id="PADI2"/>
<dbReference type="DMDM" id="7531171"/>
<dbReference type="jPOST" id="Q9Y2J8"/>
<dbReference type="MassIVE" id="Q9Y2J8"/>
<dbReference type="PaxDb" id="9606-ENSP00000364635"/>
<dbReference type="PeptideAtlas" id="Q9Y2J8"/>
<dbReference type="ProteomicsDB" id="76266"/>
<dbReference type="ProteomicsDB" id="85817">
    <molecule id="Q9Y2J8-1"/>
</dbReference>
<dbReference type="Antibodypedia" id="29317">
    <property type="antibodies" value="270 antibodies from 28 providers"/>
</dbReference>
<dbReference type="DNASU" id="11240"/>
<dbReference type="Ensembl" id="ENST00000375481.1">
    <molecule id="Q9Y2J8-2"/>
    <property type="protein sequence ID" value="ENSP00000364630.1"/>
    <property type="gene ID" value="ENSG00000117115.13"/>
</dbReference>
<dbReference type="Ensembl" id="ENST00000375486.9">
    <molecule id="Q9Y2J8-1"/>
    <property type="protein sequence ID" value="ENSP00000364635.4"/>
    <property type="gene ID" value="ENSG00000117115.13"/>
</dbReference>
<dbReference type="Ensembl" id="ENST00000707396.1">
    <molecule id="Q9Y2J8-1"/>
    <property type="protein sequence ID" value="ENSP00000516860.1"/>
    <property type="gene ID" value="ENSG00000291387.1"/>
</dbReference>
<dbReference type="Ensembl" id="ENST00000707399.1">
    <molecule id="Q9Y2J8-2"/>
    <property type="protein sequence ID" value="ENSP00000516861.1"/>
    <property type="gene ID" value="ENSG00000291387.1"/>
</dbReference>
<dbReference type="GeneID" id="11240"/>
<dbReference type="KEGG" id="hsa:11240"/>
<dbReference type="MANE-Select" id="ENST00000375486.9">
    <property type="protein sequence ID" value="ENSP00000364635.4"/>
    <property type="RefSeq nucleotide sequence ID" value="NM_007365.3"/>
    <property type="RefSeq protein sequence ID" value="NP_031391.2"/>
</dbReference>
<dbReference type="UCSC" id="uc001baf.4">
    <molecule id="Q9Y2J8-1"/>
    <property type="organism name" value="human"/>
</dbReference>
<dbReference type="AGR" id="HGNC:18341"/>
<dbReference type="CTD" id="11240"/>
<dbReference type="DisGeNET" id="11240"/>
<dbReference type="GeneCards" id="PADI2"/>
<dbReference type="HGNC" id="HGNC:18341">
    <property type="gene designation" value="PADI2"/>
</dbReference>
<dbReference type="HPA" id="ENSG00000117115">
    <property type="expression patterns" value="Tissue enhanced (brain, skeletal muscle, tongue)"/>
</dbReference>
<dbReference type="MIM" id="607935">
    <property type="type" value="gene"/>
</dbReference>
<dbReference type="neXtProt" id="NX_Q9Y2J8"/>
<dbReference type="OpenTargets" id="ENSG00000117115"/>
<dbReference type="PharmGKB" id="PA32900"/>
<dbReference type="VEuPathDB" id="HostDB:ENSG00000117115"/>
<dbReference type="eggNOG" id="ENOG502QVJA">
    <property type="taxonomic scope" value="Eukaryota"/>
</dbReference>
<dbReference type="GeneTree" id="ENSGT00940000153217"/>
<dbReference type="HOGENOM" id="CLU_021911_0_0_1"/>
<dbReference type="InParanoid" id="Q9Y2J8"/>
<dbReference type="OMA" id="NHYFQRC"/>
<dbReference type="OrthoDB" id="5102063at2759"/>
<dbReference type="PAN-GO" id="Q9Y2J8">
    <property type="GO annotations" value="4 GO annotations based on evolutionary models"/>
</dbReference>
<dbReference type="PhylomeDB" id="Q9Y2J8"/>
<dbReference type="TreeFam" id="TF331952"/>
<dbReference type="BioCyc" id="MetaCyc:HS04094-MONOMER"/>
<dbReference type="BRENDA" id="3.5.3.15">
    <property type="organism ID" value="2681"/>
</dbReference>
<dbReference type="BRENDA" id="3.5.3.6">
    <property type="organism ID" value="2681"/>
</dbReference>
<dbReference type="PathwayCommons" id="Q9Y2J8"/>
<dbReference type="Reactome" id="R-HSA-3247509">
    <property type="pathway name" value="Chromatin modifying enzymes"/>
</dbReference>
<dbReference type="Reactome" id="R-HSA-6798695">
    <property type="pathway name" value="Neutrophil degranulation"/>
</dbReference>
<dbReference type="SignaLink" id="Q9Y2J8"/>
<dbReference type="BioGRID-ORCS" id="11240">
    <property type="hits" value="11 hits in 1155 CRISPR screens"/>
</dbReference>
<dbReference type="CD-CODE" id="FB4E32DD">
    <property type="entry name" value="Presynaptic clusters and postsynaptic densities"/>
</dbReference>
<dbReference type="ChiTaRS" id="PADI2">
    <property type="organism name" value="human"/>
</dbReference>
<dbReference type="EvolutionaryTrace" id="Q9Y2J8"/>
<dbReference type="GeneWiki" id="PADI2"/>
<dbReference type="GenomeRNAi" id="11240"/>
<dbReference type="Pharos" id="Q9Y2J8">
    <property type="development level" value="Tchem"/>
</dbReference>
<dbReference type="PRO" id="PR:Q9Y2J8"/>
<dbReference type="Proteomes" id="UP000005640">
    <property type="component" value="Chromosome 1"/>
</dbReference>
<dbReference type="RNAct" id="Q9Y2J8">
    <property type="molecule type" value="protein"/>
</dbReference>
<dbReference type="Bgee" id="ENSG00000117115">
    <property type="expression patterns" value="Expressed in medial globus pallidus and 181 other cell types or tissues"/>
</dbReference>
<dbReference type="GO" id="GO:0035578">
    <property type="term" value="C:azurophil granule lumen"/>
    <property type="evidence" value="ECO:0000304"/>
    <property type="project" value="Reactome"/>
</dbReference>
<dbReference type="GO" id="GO:0005737">
    <property type="term" value="C:cytoplasm"/>
    <property type="evidence" value="ECO:0000314"/>
    <property type="project" value="UniProtKB"/>
</dbReference>
<dbReference type="GO" id="GO:0005829">
    <property type="term" value="C:cytosol"/>
    <property type="evidence" value="ECO:0000304"/>
    <property type="project" value="Reactome"/>
</dbReference>
<dbReference type="GO" id="GO:0000791">
    <property type="term" value="C:euchromatin"/>
    <property type="evidence" value="ECO:0000314"/>
    <property type="project" value="UniProtKB"/>
</dbReference>
<dbReference type="GO" id="GO:0070062">
    <property type="term" value="C:extracellular exosome"/>
    <property type="evidence" value="ECO:0007005"/>
    <property type="project" value="UniProtKB"/>
</dbReference>
<dbReference type="GO" id="GO:0005576">
    <property type="term" value="C:extracellular region"/>
    <property type="evidence" value="ECO:0000304"/>
    <property type="project" value="Reactome"/>
</dbReference>
<dbReference type="GO" id="GO:0005634">
    <property type="term" value="C:nucleus"/>
    <property type="evidence" value="ECO:0000318"/>
    <property type="project" value="GO_Central"/>
</dbReference>
<dbReference type="GO" id="GO:0005509">
    <property type="term" value="F:calcium ion binding"/>
    <property type="evidence" value="ECO:0007669"/>
    <property type="project" value="InterPro"/>
</dbReference>
<dbReference type="GO" id="GO:0140794">
    <property type="term" value="F:histone arginine deiminase activity"/>
    <property type="evidence" value="ECO:0000318"/>
    <property type="project" value="GO_Central"/>
</dbReference>
<dbReference type="GO" id="GO:0140798">
    <property type="term" value="F:histone H3R26 arginine deiminase activity"/>
    <property type="evidence" value="ECO:0000314"/>
    <property type="project" value="UniProtKB"/>
</dbReference>
<dbReference type="GO" id="GO:0030331">
    <property type="term" value="F:nuclear estrogen receptor binding"/>
    <property type="evidence" value="ECO:0000353"/>
    <property type="project" value="UniProtKB"/>
</dbReference>
<dbReference type="GO" id="GO:0042803">
    <property type="term" value="F:protein homodimerization activity"/>
    <property type="evidence" value="ECO:0000314"/>
    <property type="project" value="UniProtKB"/>
</dbReference>
<dbReference type="GO" id="GO:0004668">
    <property type="term" value="F:protein-arginine deiminase activity"/>
    <property type="evidence" value="ECO:0000314"/>
    <property type="project" value="UniProtKB"/>
</dbReference>
<dbReference type="GO" id="GO:1990830">
    <property type="term" value="P:cellular response to leukemia inhibitory factor"/>
    <property type="evidence" value="ECO:0007669"/>
    <property type="project" value="Ensembl"/>
</dbReference>
<dbReference type="GO" id="GO:0006338">
    <property type="term" value="P:chromatin remodeling"/>
    <property type="evidence" value="ECO:0000318"/>
    <property type="project" value="GO_Central"/>
</dbReference>
<dbReference type="GO" id="GO:0030520">
    <property type="term" value="P:estrogen receptor signaling pathway"/>
    <property type="evidence" value="ECO:0000315"/>
    <property type="project" value="UniProtKB"/>
</dbReference>
<dbReference type="GO" id="GO:0070100">
    <property type="term" value="P:negative regulation of chemokine-mediated signaling pathway"/>
    <property type="evidence" value="ECO:0000314"/>
    <property type="project" value="UniProtKB"/>
</dbReference>
<dbReference type="GO" id="GO:1901624">
    <property type="term" value="P:negative regulation of lymphocyte chemotaxis"/>
    <property type="evidence" value="ECO:0000314"/>
    <property type="project" value="UniProtKB"/>
</dbReference>
<dbReference type="GO" id="GO:0021762">
    <property type="term" value="P:substantia nigra development"/>
    <property type="evidence" value="ECO:0007007"/>
    <property type="project" value="UniProtKB"/>
</dbReference>
<dbReference type="GO" id="GO:0045815">
    <property type="term" value="P:transcription initiation-coupled chromatin remodeling"/>
    <property type="evidence" value="ECO:0000315"/>
    <property type="project" value="UniProtKB"/>
</dbReference>
<dbReference type="CDD" id="cd04214">
    <property type="entry name" value="PAD_N"/>
    <property type="match status" value="1"/>
</dbReference>
<dbReference type="FunFam" id="2.60.40.1700:FF:000001">
    <property type="entry name" value="Protein-arginine deiminase type-2"/>
    <property type="match status" value="1"/>
</dbReference>
<dbReference type="FunFam" id="2.60.40.1860:FF:000001">
    <property type="entry name" value="Protein-arginine deiminase type-2"/>
    <property type="match status" value="1"/>
</dbReference>
<dbReference type="FunFam" id="3.75.10.10:FF:000003">
    <property type="entry name" value="Protein-arginine deiminase type-2"/>
    <property type="match status" value="1"/>
</dbReference>
<dbReference type="Gene3D" id="3.75.10.10">
    <property type="entry name" value="L-arginine/glycine Amidinotransferase, Chain A"/>
    <property type="match status" value="1"/>
</dbReference>
<dbReference type="Gene3D" id="2.60.40.1700">
    <property type="entry name" value="Protein-arginine deiminase, central domain"/>
    <property type="match status" value="1"/>
</dbReference>
<dbReference type="Gene3D" id="2.60.40.1860">
    <property type="entry name" value="Protein-arginine deiminase, N-terminal domain"/>
    <property type="match status" value="1"/>
</dbReference>
<dbReference type="InterPro" id="IPR008972">
    <property type="entry name" value="Cupredoxin"/>
</dbReference>
<dbReference type="InterPro" id="IPR004303">
    <property type="entry name" value="PAD"/>
</dbReference>
<dbReference type="InterPro" id="IPR013530">
    <property type="entry name" value="PAD_C"/>
</dbReference>
<dbReference type="InterPro" id="IPR036556">
    <property type="entry name" value="PAD_central_sf"/>
</dbReference>
<dbReference type="InterPro" id="IPR013732">
    <property type="entry name" value="PAD_N"/>
</dbReference>
<dbReference type="InterPro" id="IPR038685">
    <property type="entry name" value="PAD_N_sf"/>
</dbReference>
<dbReference type="InterPro" id="IPR013733">
    <property type="entry name" value="Prot_Arg_deaminase_cen_dom"/>
</dbReference>
<dbReference type="PANTHER" id="PTHR10837">
    <property type="entry name" value="PEPTIDYLARGININE DEIMINASE"/>
    <property type="match status" value="1"/>
</dbReference>
<dbReference type="PANTHER" id="PTHR10837:SF12">
    <property type="entry name" value="PROTEIN-ARGININE DEIMINASE TYPE-2"/>
    <property type="match status" value="1"/>
</dbReference>
<dbReference type="Pfam" id="PF03068">
    <property type="entry name" value="PAD"/>
    <property type="match status" value="1"/>
</dbReference>
<dbReference type="Pfam" id="PF08527">
    <property type="entry name" value="PAD_M"/>
    <property type="match status" value="1"/>
</dbReference>
<dbReference type="Pfam" id="PF08526">
    <property type="entry name" value="PAD_N"/>
    <property type="match status" value="1"/>
</dbReference>
<dbReference type="PIRSF" id="PIRSF001247">
    <property type="entry name" value="Protein-arginine_deiminase"/>
    <property type="match status" value="1"/>
</dbReference>
<dbReference type="SUPFAM" id="SSF49503">
    <property type="entry name" value="Cupredoxins"/>
    <property type="match status" value="1"/>
</dbReference>
<dbReference type="SUPFAM" id="SSF55909">
    <property type="entry name" value="Pentein"/>
    <property type="match status" value="1"/>
</dbReference>
<dbReference type="SUPFAM" id="SSF110083">
    <property type="entry name" value="Peptidylarginine deiminase Pad4, middle domain"/>
    <property type="match status" value="1"/>
</dbReference>
<comment type="function">
    <text evidence="1 2 3">Catalyzes the deimination of arginine residues of proteins.</text>
</comment>
<comment type="catalytic activity">
    <reaction evidence="1 2 3">
        <text>L-arginyl-[protein] + H2O = L-citrullyl-[protein] + NH4(+)</text>
        <dbReference type="Rhea" id="RHEA:18089"/>
        <dbReference type="Rhea" id="RHEA-COMP:10532"/>
        <dbReference type="Rhea" id="RHEA-COMP:10588"/>
        <dbReference type="ChEBI" id="CHEBI:15377"/>
        <dbReference type="ChEBI" id="CHEBI:28938"/>
        <dbReference type="ChEBI" id="CHEBI:29965"/>
        <dbReference type="ChEBI" id="CHEBI:83397"/>
        <dbReference type="EC" id="3.5.3.15"/>
    </reaction>
</comment>
<comment type="cofactor">
    <cofactor evidence="1 2">
        <name>Ca(2+)</name>
        <dbReference type="ChEBI" id="CHEBI:29108"/>
    </cofactor>
    <text evidence="2">Binding of Ca(2+) triggers a conformation change that is essential for catalytic activity.</text>
</comment>
<comment type="subunit">
    <text evidence="2">Homodimer.</text>
</comment>
<comment type="subcellular location">
    <subcellularLocation>
        <location evidence="1">Cytoplasm</location>
    </subcellularLocation>
</comment>
<comment type="alternative products">
    <event type="alternative splicing"/>
    <isoform>
        <id>Q9Y2J8-1</id>
        <name>1</name>
        <sequence type="displayed"/>
    </isoform>
    <isoform>
        <id>Q9Y2J8-2</id>
        <name>2</name>
        <sequence type="described" ref="VSP_056385"/>
    </isoform>
</comment>
<comment type="tissue specificity">
    <text evidence="1">Detected in keratinocytes in epidermis (at protein level).</text>
</comment>
<comment type="similarity">
    <text evidence="6">Belongs to the protein arginine deiminase family.</text>
</comment>
<comment type="sequence caution" evidence="6">
    <conflict type="erroneous initiation">
        <sequence resource="EMBL-CDS" id="BAA76838"/>
    </conflict>
</comment>
<accession>Q9Y2J8</accession>
<accession>Q96DA7</accession>
<accession>Q9UPN2</accession>
<sequence length="665" mass="75564">MLRERTVRLQYGSRVEAVYVLGTYLWTDVYSAAPAGAQTFSLKHSEHVWVEVVRDGEAEEVATNGKQRWLLSPSTTLRVTMSQASTEASSDKVTVNYYDEEGSIPIDQAGLFLTAIEISLDVDADRDGVVEKNNPKKASWTWGPEGQGAILLVNCDRETPWLPKEDCRDEKVYSKEDLKDMSQMILRTKGPDRLPAGYEIVLYISMSDSDKVGVFYVENPFFGQRYIHILGRRKLYHVVKYTGGSAELLFFVEGLCFPDEGFSGLVSIHVSLLEYMAQDIPLTPIFTDTVIFRIAPWIMTPNILPPVSVFVCCMKDNYLFLKEVKNLVEKTNCELKVCFQYLNRGDRWIQDEIEFGYIEAPHKGFPVVLDSPRDGNLKDFPVKELLGPDFGYVTREPLFESVTSLDSFGNLEVSPPVTVNGKTYPLGRILIGSSFPLSGGRRMTKVVRDFLKAQQVQAPVELYSDWLTVGHVDEFMSFVPIPGTKKFLLLMASTSACYKLFREKQKDGHGEAIMFKGLGGMSSKRITINKILSNESLVQENLYFQRCLDWNRDILKKELGLTEQDIIDLPALFKMDEDHRARAFFPNMVNMIVLDKDLGIPKPFGPQVEEECCLEMHVRGLLEPLGLECTFIDDISAYHKFLGEVHCGTNVRRKPFTFKWWHMVP</sequence>
<reference key="1">
    <citation type="journal article" date="2002" name="Arch. Biochem. Biophys.">
        <title>Human peptidylarginine deiminase type II: molecular cloning, gene organization, and expression in human skin.</title>
        <authorList>
            <person name="Ishigami A."/>
            <person name="Ohsawa T."/>
            <person name="Asaga H."/>
            <person name="Akiyama K."/>
            <person name="Kuramoto M."/>
            <person name="Maruyama N."/>
        </authorList>
    </citation>
    <scope>NUCLEOTIDE SEQUENCE [MRNA] (ISOFORM 1)</scope>
    <scope>FUNCTION</scope>
    <scope>CATALYTIC ACTIVITY</scope>
    <scope>SUBCELLULAR LOCATION</scope>
    <scope>COFACTOR</scope>
    <scope>TISSUE SPECIFICITY</scope>
    <source>
        <tissue>Skin</tissue>
    </source>
</reference>
<reference key="2">
    <citation type="journal article" date="2004" name="Gene">
        <title>Comparative analysis of the mouse and human peptidylarginine deiminase gene clusters reveals highly conserved non-coding segments and a new human gene, PADI6.</title>
        <authorList>
            <person name="Chavanas S."/>
            <person name="Mechin M.-C."/>
            <person name="Takahara H."/>
            <person name="Kawada A."/>
            <person name="Nachat R."/>
            <person name="Serre G."/>
            <person name="Simon M."/>
        </authorList>
    </citation>
    <scope>NUCLEOTIDE SEQUENCE [GENOMIC DNA]</scope>
</reference>
<reference key="3">
    <citation type="journal article" date="1999" name="DNA Res.">
        <title>Prediction of the coding sequences of unidentified human genes. XIII. The complete sequences of 100 new cDNA clones from brain which code for large proteins in vitro.</title>
        <authorList>
            <person name="Nagase T."/>
            <person name="Ishikawa K."/>
            <person name="Suyama M."/>
            <person name="Kikuno R."/>
            <person name="Hirosawa M."/>
            <person name="Miyajima N."/>
            <person name="Tanaka A."/>
            <person name="Kotani H."/>
            <person name="Nomura N."/>
            <person name="Ohara O."/>
        </authorList>
    </citation>
    <scope>NUCLEOTIDE SEQUENCE [LARGE SCALE MRNA] (ISOFORM 1)</scope>
    <source>
        <tissue>Brain</tissue>
    </source>
</reference>
<reference key="4">
    <citation type="journal article" date="2006" name="Nature">
        <title>The DNA sequence and biological annotation of human chromosome 1.</title>
        <authorList>
            <person name="Gregory S.G."/>
            <person name="Barlow K.F."/>
            <person name="McLay K.E."/>
            <person name="Kaul R."/>
            <person name="Swarbreck D."/>
            <person name="Dunham A."/>
            <person name="Scott C.E."/>
            <person name="Howe K.L."/>
            <person name="Woodfine K."/>
            <person name="Spencer C.C.A."/>
            <person name="Jones M.C."/>
            <person name="Gillson C."/>
            <person name="Searle S."/>
            <person name="Zhou Y."/>
            <person name="Kokocinski F."/>
            <person name="McDonald L."/>
            <person name="Evans R."/>
            <person name="Phillips K."/>
            <person name="Atkinson A."/>
            <person name="Cooper R."/>
            <person name="Jones C."/>
            <person name="Hall R.E."/>
            <person name="Andrews T.D."/>
            <person name="Lloyd C."/>
            <person name="Ainscough R."/>
            <person name="Almeida J.P."/>
            <person name="Ambrose K.D."/>
            <person name="Anderson F."/>
            <person name="Andrew R.W."/>
            <person name="Ashwell R.I.S."/>
            <person name="Aubin K."/>
            <person name="Babbage A.K."/>
            <person name="Bagguley C.L."/>
            <person name="Bailey J."/>
            <person name="Beasley H."/>
            <person name="Bethel G."/>
            <person name="Bird C.P."/>
            <person name="Bray-Allen S."/>
            <person name="Brown J.Y."/>
            <person name="Brown A.J."/>
            <person name="Buckley D."/>
            <person name="Burton J."/>
            <person name="Bye J."/>
            <person name="Carder C."/>
            <person name="Chapman J.C."/>
            <person name="Clark S.Y."/>
            <person name="Clarke G."/>
            <person name="Clee C."/>
            <person name="Cobley V."/>
            <person name="Collier R.E."/>
            <person name="Corby N."/>
            <person name="Coville G.J."/>
            <person name="Davies J."/>
            <person name="Deadman R."/>
            <person name="Dunn M."/>
            <person name="Earthrowl M."/>
            <person name="Ellington A.G."/>
            <person name="Errington H."/>
            <person name="Frankish A."/>
            <person name="Frankland J."/>
            <person name="French L."/>
            <person name="Garner P."/>
            <person name="Garnett J."/>
            <person name="Gay L."/>
            <person name="Ghori M.R.J."/>
            <person name="Gibson R."/>
            <person name="Gilby L.M."/>
            <person name="Gillett W."/>
            <person name="Glithero R.J."/>
            <person name="Grafham D.V."/>
            <person name="Griffiths C."/>
            <person name="Griffiths-Jones S."/>
            <person name="Grocock R."/>
            <person name="Hammond S."/>
            <person name="Harrison E.S.I."/>
            <person name="Hart E."/>
            <person name="Haugen E."/>
            <person name="Heath P.D."/>
            <person name="Holmes S."/>
            <person name="Holt K."/>
            <person name="Howden P.J."/>
            <person name="Hunt A.R."/>
            <person name="Hunt S.E."/>
            <person name="Hunter G."/>
            <person name="Isherwood J."/>
            <person name="James R."/>
            <person name="Johnson C."/>
            <person name="Johnson D."/>
            <person name="Joy A."/>
            <person name="Kay M."/>
            <person name="Kershaw J.K."/>
            <person name="Kibukawa M."/>
            <person name="Kimberley A.M."/>
            <person name="King A."/>
            <person name="Knights A.J."/>
            <person name="Lad H."/>
            <person name="Laird G."/>
            <person name="Lawlor S."/>
            <person name="Leongamornlert D.A."/>
            <person name="Lloyd D.M."/>
            <person name="Loveland J."/>
            <person name="Lovell J."/>
            <person name="Lush M.J."/>
            <person name="Lyne R."/>
            <person name="Martin S."/>
            <person name="Mashreghi-Mohammadi M."/>
            <person name="Matthews L."/>
            <person name="Matthews N.S.W."/>
            <person name="McLaren S."/>
            <person name="Milne S."/>
            <person name="Mistry S."/>
            <person name="Moore M.J.F."/>
            <person name="Nickerson T."/>
            <person name="O'Dell C.N."/>
            <person name="Oliver K."/>
            <person name="Palmeiri A."/>
            <person name="Palmer S.A."/>
            <person name="Parker A."/>
            <person name="Patel D."/>
            <person name="Pearce A.V."/>
            <person name="Peck A.I."/>
            <person name="Pelan S."/>
            <person name="Phelps K."/>
            <person name="Phillimore B.J."/>
            <person name="Plumb R."/>
            <person name="Rajan J."/>
            <person name="Raymond C."/>
            <person name="Rouse G."/>
            <person name="Saenphimmachak C."/>
            <person name="Sehra H.K."/>
            <person name="Sheridan E."/>
            <person name="Shownkeen R."/>
            <person name="Sims S."/>
            <person name="Skuce C.D."/>
            <person name="Smith M."/>
            <person name="Steward C."/>
            <person name="Subramanian S."/>
            <person name="Sycamore N."/>
            <person name="Tracey A."/>
            <person name="Tromans A."/>
            <person name="Van Helmond Z."/>
            <person name="Wall M."/>
            <person name="Wallis J.M."/>
            <person name="White S."/>
            <person name="Whitehead S.L."/>
            <person name="Wilkinson J.E."/>
            <person name="Willey D.L."/>
            <person name="Williams H."/>
            <person name="Wilming L."/>
            <person name="Wray P.W."/>
            <person name="Wu Z."/>
            <person name="Coulson A."/>
            <person name="Vaudin M."/>
            <person name="Sulston J.E."/>
            <person name="Durbin R.M."/>
            <person name="Hubbard T."/>
            <person name="Wooster R."/>
            <person name="Dunham I."/>
            <person name="Carter N.P."/>
            <person name="McVean G."/>
            <person name="Ross M.T."/>
            <person name="Harrow J."/>
            <person name="Olson M.V."/>
            <person name="Beck S."/>
            <person name="Rogers J."/>
            <person name="Bentley D.R."/>
        </authorList>
    </citation>
    <scope>NUCLEOTIDE SEQUENCE [LARGE SCALE GENOMIC DNA]</scope>
</reference>
<reference key="5">
    <citation type="journal article" date="2004" name="Genome Res.">
        <title>The status, quality, and expansion of the NIH full-length cDNA project: the Mammalian Gene Collection (MGC).</title>
        <authorList>
            <consortium name="The MGC Project Team"/>
        </authorList>
    </citation>
    <scope>NUCLEOTIDE SEQUENCE [LARGE SCALE MRNA] (ISOFORM 2)</scope>
    <source>
        <tissue>Pancreas</tissue>
    </source>
</reference>
<reference key="6">
    <citation type="journal article" date="2018" name="ACS Chem. Biol.">
        <title>Citrullination Inactivates Nicotinamide- N-methyltransferase.</title>
        <authorList>
            <person name="Nemmara V.V."/>
            <person name="Tilvawala R."/>
            <person name="Salinger A.J."/>
            <person name="Miller L."/>
            <person name="Nguyen S.H."/>
            <person name="Weerapana E."/>
            <person name="Thompson P.R."/>
        </authorList>
    </citation>
    <scope>FUNCTION</scope>
    <scope>CATALYTIC ACTIVITY</scope>
</reference>
<reference evidence="7 8 9 10 25" key="7">
    <citation type="journal article" date="2015" name="ACS Chem. Biol.">
        <title>Protein arginine deiminase 2 binds calcium in an ordered fashion: implications for inhibitor design.</title>
        <authorList>
            <person name="Slade D.J."/>
            <person name="Fang P."/>
            <person name="Dreyton C.J."/>
            <person name="Zhang Y."/>
            <person name="Fuhrmann J."/>
            <person name="Rempel D."/>
            <person name="Bax B.D."/>
            <person name="Coonrod S.A."/>
            <person name="Lewis H.D."/>
            <person name="Guo M."/>
            <person name="Gross M.L."/>
            <person name="Thompson P.R."/>
        </authorList>
    </citation>
    <scope>X-RAY CRYSTALLOGRAPHY (1.57 ANGSTROMS) IN COMPLEX WITH CALCIUM</scope>
    <scope>FUNCTION</scope>
    <scope>CATALYTIC ACTIVITY</scope>
    <scope>SUBUNIT</scope>
    <scope>COFACTOR</scope>
    <scope>ACTIVE SITE</scope>
    <scope>MUTAGENESIS OF ASP-123; ASP-125; ASP-166; ASP-169; ASP-177; TRP-348; GLN-350; GLU-354; ASP-370; ARG-373; ASP-374; ASP-389; GLU-412 AND CYS-647</scope>
</reference>
<evidence type="ECO:0000269" key="1">
    <source>
    </source>
</evidence>
<evidence type="ECO:0000269" key="2">
    <source>
    </source>
</evidence>
<evidence type="ECO:0000269" key="3">
    <source>
    </source>
</evidence>
<evidence type="ECO:0000303" key="4">
    <source>
    </source>
</evidence>
<evidence type="ECO:0000303" key="5">
    <source>
    </source>
</evidence>
<evidence type="ECO:0000305" key="6"/>
<evidence type="ECO:0007744" key="7">
    <source>
        <dbReference type="PDB" id="4N20"/>
    </source>
</evidence>
<evidence type="ECO:0007744" key="8">
    <source>
        <dbReference type="PDB" id="4N22"/>
    </source>
</evidence>
<evidence type="ECO:0007744" key="9">
    <source>
        <dbReference type="PDB" id="4N24"/>
    </source>
</evidence>
<evidence type="ECO:0007744" key="10">
    <source>
        <dbReference type="PDB" id="4N25"/>
    </source>
</evidence>
<evidence type="ECO:0007744" key="11">
    <source>
        <dbReference type="PDB" id="4N26"/>
    </source>
</evidence>
<evidence type="ECO:0007744" key="12">
    <source>
        <dbReference type="PDB" id="4N28"/>
    </source>
</evidence>
<evidence type="ECO:0007744" key="13">
    <source>
        <dbReference type="PDB" id="4N2A"/>
    </source>
</evidence>
<evidence type="ECO:0007744" key="14">
    <source>
        <dbReference type="PDB" id="4N2B"/>
    </source>
</evidence>
<evidence type="ECO:0007744" key="15">
    <source>
        <dbReference type="PDB" id="4N2C"/>
    </source>
</evidence>
<evidence type="ECO:0007744" key="16">
    <source>
        <dbReference type="PDB" id="4N2D"/>
    </source>
</evidence>
<evidence type="ECO:0007744" key="17">
    <source>
        <dbReference type="PDB" id="4N2E"/>
    </source>
</evidence>
<evidence type="ECO:0007744" key="18">
    <source>
        <dbReference type="PDB" id="4N2F"/>
    </source>
</evidence>
<evidence type="ECO:0007744" key="19">
    <source>
        <dbReference type="PDB" id="4N2G"/>
    </source>
</evidence>
<evidence type="ECO:0007744" key="20">
    <source>
        <dbReference type="PDB" id="4N2H"/>
    </source>
</evidence>
<evidence type="ECO:0007744" key="21">
    <source>
        <dbReference type="PDB" id="4N2I"/>
    </source>
</evidence>
<evidence type="ECO:0007744" key="22">
    <source>
        <dbReference type="PDB" id="4N2K"/>
    </source>
</evidence>
<evidence type="ECO:0007744" key="23">
    <source>
        <dbReference type="PDB" id="4N2L"/>
    </source>
</evidence>
<evidence type="ECO:0007744" key="24">
    <source>
        <dbReference type="PDB" id="4N2M"/>
    </source>
</evidence>
<evidence type="ECO:0007744" key="25">
    <source>
        <dbReference type="PDB" id="4N2N"/>
    </source>
</evidence>
<evidence type="ECO:0007829" key="26">
    <source>
        <dbReference type="PDB" id="4N20"/>
    </source>
</evidence>
<evidence type="ECO:0007829" key="27">
    <source>
        <dbReference type="PDB" id="4N2A"/>
    </source>
</evidence>
<evidence type="ECO:0007829" key="28">
    <source>
        <dbReference type="PDB" id="4N2B"/>
    </source>
</evidence>
<evidence type="ECO:0007829" key="29">
    <source>
        <dbReference type="PDB" id="4N2C"/>
    </source>
</evidence>
<evidence type="ECO:0007829" key="30">
    <source>
        <dbReference type="PDB" id="4N2K"/>
    </source>
</evidence>
<evidence type="ECO:0007829" key="31">
    <source>
        <dbReference type="PDB" id="4N2M"/>
    </source>
</evidence>
<evidence type="ECO:0007829" key="32">
    <source>
        <dbReference type="PDB" id="4N2N"/>
    </source>
</evidence>
<protein>
    <recommendedName>
        <fullName>Protein-arginine deiminase type-2</fullName>
        <ecNumber evidence="1 2 3">3.5.3.15</ecNumber>
    </recommendedName>
    <alternativeName>
        <fullName>PAD-H19</fullName>
    </alternativeName>
    <alternativeName>
        <fullName evidence="4">Peptidylarginine deiminase II</fullName>
    </alternativeName>
    <alternativeName>
        <fullName>Protein-arginine deiminase type II</fullName>
    </alternativeName>
</protein>
<organism>
    <name type="scientific">Homo sapiens</name>
    <name type="common">Human</name>
    <dbReference type="NCBI Taxonomy" id="9606"/>
    <lineage>
        <taxon>Eukaryota</taxon>
        <taxon>Metazoa</taxon>
        <taxon>Chordata</taxon>
        <taxon>Craniata</taxon>
        <taxon>Vertebrata</taxon>
        <taxon>Euteleostomi</taxon>
        <taxon>Mammalia</taxon>
        <taxon>Eutheria</taxon>
        <taxon>Euarchontoglires</taxon>
        <taxon>Primates</taxon>
        <taxon>Haplorrhini</taxon>
        <taxon>Catarrhini</taxon>
        <taxon>Hominidae</taxon>
        <taxon>Homo</taxon>
    </lineage>
</organism>
<keyword id="KW-0002">3D-structure</keyword>
<keyword id="KW-0025">Alternative splicing</keyword>
<keyword id="KW-0106">Calcium</keyword>
<keyword id="KW-0963">Cytoplasm</keyword>
<keyword id="KW-0378">Hydrolase</keyword>
<keyword id="KW-0479">Metal-binding</keyword>
<keyword id="KW-1267">Proteomics identification</keyword>
<keyword id="KW-1185">Reference proteome</keyword>
<proteinExistence type="evidence at protein level"/>
<feature type="chain" id="PRO_0000220026" description="Protein-arginine deiminase type-2">
    <location>
        <begin position="1"/>
        <end position="665"/>
    </location>
</feature>
<feature type="active site" description="Nucleophile" evidence="2">
    <location>
        <position position="647"/>
    </location>
</feature>
<feature type="binding site" evidence="2 7 8 9 10 11 12 13 14 15 18 19 20 21 23 24 25">
    <location>
        <position position="123"/>
    </location>
    <ligand>
        <name>Ca(2+)</name>
        <dbReference type="ChEBI" id="CHEBI:29108"/>
        <label>1</label>
    </ligand>
</feature>
<feature type="binding site" evidence="2 7 8 9 11 12 13 14 15 16 17 18 19 20 21 22 23 24 25">
    <location>
        <position position="125"/>
    </location>
    <ligand>
        <name>Ca(2+)</name>
        <dbReference type="ChEBI" id="CHEBI:29108"/>
        <label>1</label>
    </ligand>
</feature>
<feature type="binding site" evidence="2 7 8 9 10 11 12 13 14 15 16 17 18 19 20 21 22 23 24 25">
    <location>
        <position position="127"/>
    </location>
    <ligand>
        <name>Ca(2+)</name>
        <dbReference type="ChEBI" id="CHEBI:29108"/>
        <label>1</label>
    </ligand>
</feature>
<feature type="binding site" evidence="2 7 8 9 10 11 12 13 14 15 16 17 18 19 20 21 22 23 24 25">
    <location>
        <position position="129"/>
    </location>
    <ligand>
        <name>Ca(2+)</name>
        <dbReference type="ChEBI" id="CHEBI:29108"/>
        <label>1</label>
    </ligand>
</feature>
<feature type="binding site" evidence="2 7 8 9 10 11 12 13 14 15 16 17 18 19 20 21 22 23 24 25">
    <location>
        <position position="131"/>
    </location>
    <ligand>
        <name>Ca(2+)</name>
        <dbReference type="ChEBI" id="CHEBI:29108"/>
        <label>1</label>
    </ligand>
</feature>
<feature type="binding site" evidence="2 10 11 12 13 14 17 19 21 23 25">
    <location>
        <position position="154"/>
    </location>
    <ligand>
        <name>Ca(2+)</name>
        <dbReference type="ChEBI" id="CHEBI:29108"/>
        <label>2</label>
    </ligand>
</feature>
<feature type="binding site" evidence="10 11 12 13 14 17 19 21 23 25">
    <location>
        <position position="156"/>
    </location>
    <ligand>
        <name>Ca(2+)</name>
        <dbReference type="ChEBI" id="CHEBI:29108"/>
        <label>2</label>
    </ligand>
</feature>
<feature type="binding site" evidence="2 10 11 12 13 14 15 17 19 21 23 25">
    <location>
        <position position="156"/>
    </location>
    <ligand>
        <name>Ca(2+)</name>
        <dbReference type="ChEBI" id="CHEBI:29108"/>
        <label>3</label>
    </ligand>
</feature>
<feature type="binding site" evidence="11 12 13 14 17 19 21 23 25">
    <location>
        <position position="158"/>
    </location>
    <ligand>
        <name>Ca(2+)</name>
        <dbReference type="ChEBI" id="CHEBI:29108"/>
        <label>2</label>
    </ligand>
</feature>
<feature type="binding site" evidence="2 11 12 13 14 15 17 19 21 23 25">
    <location>
        <position position="158"/>
    </location>
    <ligand>
        <name>Ca(2+)</name>
        <dbReference type="ChEBI" id="CHEBI:29108"/>
        <label>3</label>
    </ligand>
</feature>
<feature type="binding site" evidence="10 11 12 13 14 17 19 21 23 25">
    <location>
        <position position="166"/>
    </location>
    <ligand>
        <name>Ca(2+)</name>
        <dbReference type="ChEBI" id="CHEBI:29108"/>
        <label>2</label>
    </ligand>
</feature>
<feature type="binding site" evidence="2 10 11 13 14 15 17 21 23">
    <location>
        <position position="166"/>
    </location>
    <ligand>
        <name>Ca(2+)</name>
        <dbReference type="ChEBI" id="CHEBI:29108"/>
        <label>4</label>
    </ligand>
</feature>
<feature type="binding site" evidence="2 10 11 13 14 15 17 21 23">
    <location>
        <position position="169"/>
    </location>
    <ligand>
        <name>Ca(2+)</name>
        <dbReference type="ChEBI" id="CHEBI:29108"/>
        <label>4</label>
    </ligand>
</feature>
<feature type="binding site" evidence="2 10 11 13 14 15 17 21 23">
    <location>
        <position position="171"/>
    </location>
    <ligand>
        <name>Ca(2+)</name>
        <dbReference type="ChEBI" id="CHEBI:29108"/>
        <label>4</label>
    </ligand>
</feature>
<feature type="binding site" evidence="10 11 12 13 14 17 19 23 25">
    <location>
        <position position="177"/>
    </location>
    <ligand>
        <name>Ca(2+)</name>
        <dbReference type="ChEBI" id="CHEBI:29108"/>
        <label>2</label>
    </ligand>
</feature>
<feature type="binding site" evidence="10 11 12 13 14 17 19 21 23 25">
    <location>
        <position position="180"/>
    </location>
    <ligand>
        <name>Ca(2+)</name>
        <dbReference type="ChEBI" id="CHEBI:29108"/>
        <label>2</label>
    </ligand>
</feature>
<feature type="binding site" evidence="2 10 11 12 13 14 15 17 19 21 23 25">
    <location>
        <position position="180"/>
    </location>
    <ligand>
        <name>Ca(2+)</name>
        <dbReference type="ChEBI" id="CHEBI:29108"/>
        <label>3</label>
    </ligand>
</feature>
<feature type="binding site" evidence="2 12 14 15 21">
    <location>
        <position position="354"/>
    </location>
    <ligand>
        <name>Ca(2+)</name>
        <dbReference type="ChEBI" id="CHEBI:29108"/>
        <label>5</label>
    </ligand>
</feature>
<feature type="binding site" evidence="2 10 11 12 13 14 17 19 21 23 25">
    <location>
        <position position="389"/>
    </location>
    <ligand>
        <name>Ca(2+)</name>
        <dbReference type="ChEBI" id="CHEBI:29108"/>
        <label>3</label>
    </ligand>
</feature>
<feature type="binding site" evidence="2 12 14 15 17 21">
    <location>
        <position position="408"/>
    </location>
    <ligand>
        <name>Ca(2+)</name>
        <dbReference type="ChEBI" id="CHEBI:29108"/>
        <label>5</label>
    </ligand>
</feature>
<feature type="binding site" evidence="2 12 14 15 17 21">
    <location>
        <position position="411"/>
    </location>
    <ligand>
        <name>Ca(2+)</name>
        <dbReference type="ChEBI" id="CHEBI:29108"/>
        <label>5</label>
    </ligand>
</feature>
<feature type="binding site" evidence="2 12 14 15 17 21">
    <location>
        <position position="412"/>
    </location>
    <ligand>
        <name>Ca(2+)</name>
        <dbReference type="ChEBI" id="CHEBI:29108"/>
        <label>5</label>
    </ligand>
</feature>
<feature type="splice variant" id="VSP_056385" description="In isoform 2." evidence="5">
    <location>
        <begin position="438"/>
        <end position="665"/>
    </location>
</feature>
<feature type="mutagenesis site" description="Mildly reduced enzyme activity." evidence="2">
    <original>D</original>
    <variation>N</variation>
    <location>
        <position position="123"/>
    </location>
</feature>
<feature type="mutagenesis site" description="Mildly reduced enzyme activity." evidence="2">
    <original>D</original>
    <variation>A</variation>
    <location>
        <position position="125"/>
    </location>
</feature>
<feature type="mutagenesis site" description="Reduced enzyme activity." evidence="2">
    <original>D</original>
    <variation>A</variation>
    <location>
        <position position="166"/>
    </location>
</feature>
<feature type="mutagenesis site" description="Mildly reduced enzyme activity." evidence="2">
    <original>D</original>
    <variation>A</variation>
    <location>
        <position position="169"/>
    </location>
</feature>
<feature type="mutagenesis site" description="Reduced enzyme activity." evidence="2">
    <original>D</original>
    <variation>A</variation>
    <location>
        <position position="177"/>
    </location>
</feature>
<feature type="mutagenesis site" description="Loss of enzyme activity." evidence="2">
    <original>W</original>
    <variation>A</variation>
    <location>
        <position position="348"/>
    </location>
</feature>
<feature type="mutagenesis site" description="Strongly reduced enzyme activity." evidence="2">
    <original>Q</original>
    <variation>A</variation>
    <location>
        <position position="350"/>
    </location>
</feature>
<feature type="mutagenesis site" description="Loss of enzyme activity." evidence="2">
    <original>E</original>
    <variation>A</variation>
    <location>
        <position position="354"/>
    </location>
</feature>
<feature type="mutagenesis site" description="Reduced enzyme activity." evidence="2">
    <original>D</original>
    <variation>A</variation>
    <location>
        <position position="370"/>
    </location>
</feature>
<feature type="mutagenesis site" description="Strongly reduced enzyme activity." evidence="2">
    <original>R</original>
    <variation>A</variation>
    <location>
        <position position="373"/>
    </location>
</feature>
<feature type="mutagenesis site" description="Reduced enzyme activity." evidence="2">
    <original>D</original>
    <variation>A</variation>
    <location>
        <position position="374"/>
    </location>
</feature>
<feature type="mutagenesis site" description="Reduced enzyme activity." evidence="2">
    <original>D</original>
    <variation>A</variation>
    <location>
        <position position="389"/>
    </location>
</feature>
<feature type="mutagenesis site" description="Strongly reduced enzyme activity." evidence="2">
    <original>E</original>
    <variation>A</variation>
    <location>
        <position position="412"/>
    </location>
</feature>
<feature type="mutagenesis site" description="Loss of enzyme activity." evidence="2">
    <original>C</original>
    <variation>A</variation>
    <location>
        <position position="647"/>
    </location>
</feature>
<feature type="sequence conflict" description="In Ref. 1; BAA82557." evidence="6" ref="1">
    <original>W</original>
    <variation>L</variation>
    <location>
        <position position="661"/>
    </location>
</feature>
<feature type="strand" evidence="30">
    <location>
        <begin position="4"/>
        <end position="6"/>
    </location>
</feature>
<feature type="strand" evidence="28">
    <location>
        <begin position="11"/>
        <end position="13"/>
    </location>
</feature>
<feature type="strand" evidence="30">
    <location>
        <begin position="15"/>
        <end position="20"/>
    </location>
</feature>
<feature type="strand" evidence="30">
    <location>
        <begin position="24"/>
        <end position="27"/>
    </location>
</feature>
<feature type="strand" evidence="26">
    <location>
        <begin position="30"/>
        <end position="33"/>
    </location>
</feature>
<feature type="strand" evidence="30">
    <location>
        <begin position="39"/>
        <end position="44"/>
    </location>
</feature>
<feature type="strand" evidence="30">
    <location>
        <begin position="49"/>
        <end position="54"/>
    </location>
</feature>
<feature type="strand" evidence="30">
    <location>
        <begin position="57"/>
        <end position="61"/>
    </location>
</feature>
<feature type="strand" evidence="30">
    <location>
        <begin position="75"/>
        <end position="80"/>
    </location>
</feature>
<feature type="strand" evidence="29">
    <location>
        <begin position="86"/>
        <end position="88"/>
    </location>
</feature>
<feature type="strand" evidence="30">
    <location>
        <begin position="91"/>
        <end position="98"/>
    </location>
</feature>
<feature type="strand" evidence="30">
    <location>
        <begin position="106"/>
        <end position="121"/>
    </location>
</feature>
<feature type="strand" evidence="30">
    <location>
        <begin position="126"/>
        <end position="129"/>
    </location>
</feature>
<feature type="turn" evidence="30">
    <location>
        <begin position="135"/>
        <end position="138"/>
    </location>
</feature>
<feature type="strand" evidence="30">
    <location>
        <begin position="149"/>
        <end position="151"/>
    </location>
</feature>
<feature type="strand" evidence="27">
    <location>
        <begin position="162"/>
        <end position="164"/>
    </location>
</feature>
<feature type="helix" evidence="28">
    <location>
        <begin position="166"/>
        <end position="168"/>
    </location>
</feature>
<feature type="helix" evidence="30">
    <location>
        <begin position="175"/>
        <end position="178"/>
    </location>
</feature>
<feature type="strand" evidence="30">
    <location>
        <begin position="181"/>
        <end position="193"/>
    </location>
</feature>
<feature type="strand" evidence="30">
    <location>
        <begin position="198"/>
        <end position="203"/>
    </location>
</feature>
<feature type="helix" evidence="30">
    <location>
        <begin position="207"/>
        <end position="210"/>
    </location>
</feature>
<feature type="strand" evidence="30">
    <location>
        <begin position="212"/>
        <end position="216"/>
    </location>
</feature>
<feature type="helix" evidence="31">
    <location>
        <begin position="220"/>
        <end position="222"/>
    </location>
</feature>
<feature type="strand" evidence="30">
    <location>
        <begin position="226"/>
        <end position="231"/>
    </location>
</feature>
<feature type="strand" evidence="30">
    <location>
        <begin position="236"/>
        <end position="239"/>
    </location>
</feature>
<feature type="strand" evidence="30">
    <location>
        <begin position="243"/>
        <end position="254"/>
    </location>
</feature>
<feature type="strand" evidence="30">
    <location>
        <begin position="264"/>
        <end position="274"/>
    </location>
</feature>
<feature type="strand" evidence="30">
    <location>
        <begin position="283"/>
        <end position="294"/>
    </location>
</feature>
<feature type="strand" evidence="30">
    <location>
        <begin position="306"/>
        <end position="312"/>
    </location>
</feature>
<feature type="helix" evidence="30">
    <location>
        <begin position="318"/>
        <end position="329"/>
    </location>
</feature>
<feature type="strand" evidence="30">
    <location>
        <begin position="334"/>
        <end position="338"/>
    </location>
</feature>
<feature type="helix" evidence="29">
    <location>
        <begin position="340"/>
        <end position="343"/>
    </location>
</feature>
<feature type="helix" evidence="30">
    <location>
        <begin position="348"/>
        <end position="351"/>
    </location>
</feature>
<feature type="strand" evidence="30">
    <location>
        <begin position="353"/>
        <end position="360"/>
    </location>
</feature>
<feature type="strand" evidence="30">
    <location>
        <begin position="363"/>
        <end position="370"/>
    </location>
</feature>
<feature type="strand" evidence="32">
    <location>
        <begin position="375"/>
        <end position="377"/>
    </location>
</feature>
<feature type="helix" evidence="31">
    <location>
        <begin position="383"/>
        <end position="386"/>
    </location>
</feature>
<feature type="strand" evidence="30">
    <location>
        <begin position="391"/>
        <end position="394"/>
    </location>
</feature>
<feature type="strand" evidence="28">
    <location>
        <begin position="398"/>
        <end position="400"/>
    </location>
</feature>
<feature type="helix" evidence="30">
    <location>
        <begin position="404"/>
        <end position="406"/>
    </location>
</feature>
<feature type="helix" evidence="30">
    <location>
        <begin position="408"/>
        <end position="410"/>
    </location>
</feature>
<feature type="strand" evidence="30">
    <location>
        <begin position="411"/>
        <end position="413"/>
    </location>
</feature>
<feature type="strand" evidence="30">
    <location>
        <begin position="417"/>
        <end position="419"/>
    </location>
</feature>
<feature type="strand" evidence="30">
    <location>
        <begin position="422"/>
        <end position="424"/>
    </location>
</feature>
<feature type="strand" evidence="30">
    <location>
        <begin position="429"/>
        <end position="433"/>
    </location>
</feature>
<feature type="turn" evidence="28">
    <location>
        <begin position="436"/>
        <end position="439"/>
    </location>
</feature>
<feature type="helix" evidence="30">
    <location>
        <begin position="445"/>
        <end position="453"/>
    </location>
</feature>
<feature type="strand" evidence="30">
    <location>
        <begin position="460"/>
        <end position="463"/>
    </location>
</feature>
<feature type="strand" evidence="30">
    <location>
        <begin position="467"/>
        <end position="469"/>
    </location>
</feature>
<feature type="helix" evidence="30">
    <location>
        <begin position="472"/>
        <end position="474"/>
    </location>
</feature>
<feature type="strand" evidence="30">
    <location>
        <begin position="476"/>
        <end position="480"/>
    </location>
</feature>
<feature type="strand" evidence="30">
    <location>
        <begin position="487"/>
        <end position="493"/>
    </location>
</feature>
<feature type="helix" evidence="30">
    <location>
        <begin position="494"/>
        <end position="506"/>
    </location>
</feature>
<feature type="turn" evidence="30">
    <location>
        <begin position="507"/>
        <end position="511"/>
    </location>
</feature>
<feature type="strand" evidence="30">
    <location>
        <begin position="513"/>
        <end position="515"/>
    </location>
</feature>
<feature type="turn" evidence="30">
    <location>
        <begin position="519"/>
        <end position="521"/>
    </location>
</feature>
<feature type="helix" evidence="30">
    <location>
        <begin position="522"/>
        <end position="524"/>
    </location>
</feature>
<feature type="helix" evidence="30">
    <location>
        <begin position="528"/>
        <end position="532"/>
    </location>
</feature>
<feature type="helix" evidence="30">
    <location>
        <begin position="535"/>
        <end position="559"/>
    </location>
</feature>
<feature type="helix" evidence="30">
    <location>
        <begin position="563"/>
        <end position="565"/>
    </location>
</feature>
<feature type="strand" evidence="30">
    <location>
        <begin position="566"/>
        <end position="570"/>
    </location>
</feature>
<feature type="strand" evidence="30">
    <location>
        <begin position="573"/>
        <end position="575"/>
    </location>
</feature>
<feature type="strand" evidence="30">
    <location>
        <begin position="581"/>
        <end position="585"/>
    </location>
</feature>
<feature type="strand" evidence="30">
    <location>
        <begin position="592"/>
        <end position="594"/>
    </location>
</feature>
<feature type="strand" evidence="30">
    <location>
        <begin position="597"/>
        <end position="601"/>
    </location>
</feature>
<feature type="helix" evidence="30">
    <location>
        <begin position="613"/>
        <end position="622"/>
    </location>
</feature>
<feature type="helix" evidence="30">
    <location>
        <begin position="623"/>
        <end position="625"/>
    </location>
</feature>
<feature type="strand" evidence="30">
    <location>
        <begin position="628"/>
        <end position="632"/>
    </location>
</feature>
<feature type="helix" evidence="30">
    <location>
        <begin position="636"/>
        <end position="638"/>
    </location>
</feature>
<feature type="strand" evidence="30">
    <location>
        <begin position="648"/>
        <end position="653"/>
    </location>
</feature>
<feature type="helix" evidence="30">
    <location>
        <begin position="660"/>
        <end position="662"/>
    </location>
</feature>
<name>PADI2_HUMAN</name>